<organism>
    <name type="scientific">Rhodopseudomonas palustris (strain ATCC BAA-98 / CGA009)</name>
    <dbReference type="NCBI Taxonomy" id="258594"/>
    <lineage>
        <taxon>Bacteria</taxon>
        <taxon>Pseudomonadati</taxon>
        <taxon>Pseudomonadota</taxon>
        <taxon>Alphaproteobacteria</taxon>
        <taxon>Hyphomicrobiales</taxon>
        <taxon>Nitrobacteraceae</taxon>
        <taxon>Rhodopseudomonas</taxon>
    </lineage>
</organism>
<sequence length="357" mass="37033">MTERKHGLTYADSGVDIDAGNRLVDLIKPMVRATARAGADSEIGGFGGLFDLKAAGFKDPVLVAATDGVGTKIKVAIDAGLHTGIGIDLVAMSVNDLVVQGAEPLFFLDYFACGKLDPEAAAEIVAGVAEACRESGCALIGGETAEMPGLYKDGDYDLAGFSVGAAERGTLLPSKDIAEGDAVIGLASSGVHSNGFSLVRKIVEKSGLPYDAPAPFSPVMTLGGALLAPTKLYVKSCLQAIRDTGAVKGLAHITGGGFTENIPRVLPKHLGVGIDLPRIPVLPVFKWLAEQGEIAELELLRTFNCGIGMVIIVKADAVDQVTESLTASGESVHLLGQVIAAKGEQRVVYDGHLDLAW</sequence>
<accession>Q6N5C8</accession>
<keyword id="KW-0067">ATP-binding</keyword>
<keyword id="KW-0963">Cytoplasm</keyword>
<keyword id="KW-0436">Ligase</keyword>
<keyword id="KW-0547">Nucleotide-binding</keyword>
<keyword id="KW-0658">Purine biosynthesis</keyword>
<comment type="catalytic activity">
    <reaction evidence="1">
        <text>2-formamido-N(1)-(5-O-phospho-beta-D-ribosyl)acetamidine + ATP = 5-amino-1-(5-phospho-beta-D-ribosyl)imidazole + ADP + phosphate + H(+)</text>
        <dbReference type="Rhea" id="RHEA:23032"/>
        <dbReference type="ChEBI" id="CHEBI:15378"/>
        <dbReference type="ChEBI" id="CHEBI:30616"/>
        <dbReference type="ChEBI" id="CHEBI:43474"/>
        <dbReference type="ChEBI" id="CHEBI:137981"/>
        <dbReference type="ChEBI" id="CHEBI:147287"/>
        <dbReference type="ChEBI" id="CHEBI:456216"/>
        <dbReference type="EC" id="6.3.3.1"/>
    </reaction>
</comment>
<comment type="pathway">
    <text evidence="1">Purine metabolism; IMP biosynthesis via de novo pathway; 5-amino-1-(5-phospho-D-ribosyl)imidazole from N(2)-formyl-N(1)-(5-phospho-D-ribosyl)glycinamide: step 2/2.</text>
</comment>
<comment type="subcellular location">
    <subcellularLocation>
        <location evidence="1">Cytoplasm</location>
    </subcellularLocation>
</comment>
<comment type="similarity">
    <text evidence="1">Belongs to the AIR synthase family.</text>
</comment>
<proteinExistence type="inferred from homology"/>
<reference key="1">
    <citation type="journal article" date="2004" name="Nat. Biotechnol.">
        <title>Complete genome sequence of the metabolically versatile photosynthetic bacterium Rhodopseudomonas palustris.</title>
        <authorList>
            <person name="Larimer F.W."/>
            <person name="Chain P."/>
            <person name="Hauser L."/>
            <person name="Lamerdin J.E."/>
            <person name="Malfatti S."/>
            <person name="Do L."/>
            <person name="Land M.L."/>
            <person name="Pelletier D.A."/>
            <person name="Beatty J.T."/>
            <person name="Lang A.S."/>
            <person name="Tabita F.R."/>
            <person name="Gibson J.L."/>
            <person name="Hanson T.E."/>
            <person name="Bobst C."/>
            <person name="Torres y Torres J.L."/>
            <person name="Peres C."/>
            <person name="Harrison F.H."/>
            <person name="Gibson J."/>
            <person name="Harwood C.S."/>
        </authorList>
    </citation>
    <scope>NUCLEOTIDE SEQUENCE [LARGE SCALE GENOMIC DNA]</scope>
    <source>
        <strain>ATCC BAA-98 / CGA009</strain>
    </source>
</reference>
<gene>
    <name evidence="1" type="primary">purM</name>
    <name type="ordered locus">RPA3051</name>
</gene>
<evidence type="ECO:0000255" key="1">
    <source>
        <dbReference type="HAMAP-Rule" id="MF_00741"/>
    </source>
</evidence>
<name>PUR5_RHOPA</name>
<protein>
    <recommendedName>
        <fullName evidence="1">Phosphoribosylformylglycinamidine cyclo-ligase</fullName>
        <ecNumber evidence="1">6.3.3.1</ecNumber>
    </recommendedName>
    <alternativeName>
        <fullName evidence="1">AIR synthase</fullName>
    </alternativeName>
    <alternativeName>
        <fullName evidence="1">AIRS</fullName>
    </alternativeName>
    <alternativeName>
        <fullName evidence="1">Phosphoribosyl-aminoimidazole synthetase</fullName>
    </alternativeName>
</protein>
<dbReference type="EC" id="6.3.3.1" evidence="1"/>
<dbReference type="EMBL" id="BX572602">
    <property type="protein sequence ID" value="CAE28492.1"/>
    <property type="molecule type" value="Genomic_DNA"/>
</dbReference>
<dbReference type="RefSeq" id="WP_011158597.1">
    <property type="nucleotide sequence ID" value="NZ_CP116810.1"/>
</dbReference>
<dbReference type="SMR" id="Q6N5C8"/>
<dbReference type="STRING" id="258594.RPA3051"/>
<dbReference type="GeneID" id="66894133"/>
<dbReference type="eggNOG" id="COG0150">
    <property type="taxonomic scope" value="Bacteria"/>
</dbReference>
<dbReference type="HOGENOM" id="CLU_047116_0_0_5"/>
<dbReference type="PhylomeDB" id="Q6N5C8"/>
<dbReference type="UniPathway" id="UPA00074">
    <property type="reaction ID" value="UER00129"/>
</dbReference>
<dbReference type="GO" id="GO:0005829">
    <property type="term" value="C:cytosol"/>
    <property type="evidence" value="ECO:0007669"/>
    <property type="project" value="TreeGrafter"/>
</dbReference>
<dbReference type="GO" id="GO:0005524">
    <property type="term" value="F:ATP binding"/>
    <property type="evidence" value="ECO:0007669"/>
    <property type="project" value="UniProtKB-KW"/>
</dbReference>
<dbReference type="GO" id="GO:0004637">
    <property type="term" value="F:phosphoribosylamine-glycine ligase activity"/>
    <property type="evidence" value="ECO:0007669"/>
    <property type="project" value="TreeGrafter"/>
</dbReference>
<dbReference type="GO" id="GO:0004641">
    <property type="term" value="F:phosphoribosylformylglycinamidine cyclo-ligase activity"/>
    <property type="evidence" value="ECO:0007669"/>
    <property type="project" value="UniProtKB-UniRule"/>
</dbReference>
<dbReference type="GO" id="GO:0006189">
    <property type="term" value="P:'de novo' IMP biosynthetic process"/>
    <property type="evidence" value="ECO:0007669"/>
    <property type="project" value="UniProtKB-UniRule"/>
</dbReference>
<dbReference type="GO" id="GO:0046084">
    <property type="term" value="P:adenine biosynthetic process"/>
    <property type="evidence" value="ECO:0007669"/>
    <property type="project" value="TreeGrafter"/>
</dbReference>
<dbReference type="CDD" id="cd02196">
    <property type="entry name" value="PurM"/>
    <property type="match status" value="1"/>
</dbReference>
<dbReference type="FunFam" id="3.30.1330.10:FF:000001">
    <property type="entry name" value="Phosphoribosylformylglycinamidine cyclo-ligase"/>
    <property type="match status" value="1"/>
</dbReference>
<dbReference type="FunFam" id="3.90.650.10:FF:000019">
    <property type="entry name" value="Trifunctional purine biosynthetic protein adenosine-3"/>
    <property type="match status" value="1"/>
</dbReference>
<dbReference type="Gene3D" id="3.90.650.10">
    <property type="entry name" value="PurM-like C-terminal domain"/>
    <property type="match status" value="1"/>
</dbReference>
<dbReference type="Gene3D" id="3.30.1330.10">
    <property type="entry name" value="PurM-like, N-terminal domain"/>
    <property type="match status" value="1"/>
</dbReference>
<dbReference type="HAMAP" id="MF_00741">
    <property type="entry name" value="AIRS"/>
    <property type="match status" value="1"/>
</dbReference>
<dbReference type="InterPro" id="IPR010918">
    <property type="entry name" value="PurM-like_C_dom"/>
</dbReference>
<dbReference type="InterPro" id="IPR036676">
    <property type="entry name" value="PurM-like_C_sf"/>
</dbReference>
<dbReference type="InterPro" id="IPR016188">
    <property type="entry name" value="PurM-like_N"/>
</dbReference>
<dbReference type="InterPro" id="IPR036921">
    <property type="entry name" value="PurM-like_N_sf"/>
</dbReference>
<dbReference type="InterPro" id="IPR004733">
    <property type="entry name" value="PurM_cligase"/>
</dbReference>
<dbReference type="NCBIfam" id="TIGR00878">
    <property type="entry name" value="purM"/>
    <property type="match status" value="1"/>
</dbReference>
<dbReference type="PANTHER" id="PTHR10520:SF12">
    <property type="entry name" value="TRIFUNCTIONAL PURINE BIOSYNTHETIC PROTEIN ADENOSINE-3"/>
    <property type="match status" value="1"/>
</dbReference>
<dbReference type="PANTHER" id="PTHR10520">
    <property type="entry name" value="TRIFUNCTIONAL PURINE BIOSYNTHETIC PROTEIN ADENOSINE-3-RELATED"/>
    <property type="match status" value="1"/>
</dbReference>
<dbReference type="Pfam" id="PF00586">
    <property type="entry name" value="AIRS"/>
    <property type="match status" value="1"/>
</dbReference>
<dbReference type="Pfam" id="PF02769">
    <property type="entry name" value="AIRS_C"/>
    <property type="match status" value="1"/>
</dbReference>
<dbReference type="SUPFAM" id="SSF56042">
    <property type="entry name" value="PurM C-terminal domain-like"/>
    <property type="match status" value="1"/>
</dbReference>
<dbReference type="SUPFAM" id="SSF55326">
    <property type="entry name" value="PurM N-terminal domain-like"/>
    <property type="match status" value="1"/>
</dbReference>
<feature type="chain" id="PRO_0000258395" description="Phosphoribosylformylglycinamidine cyclo-ligase">
    <location>
        <begin position="1"/>
        <end position="357"/>
    </location>
</feature>